<keyword id="KW-0238">DNA-binding</keyword>
<keyword id="KW-0539">Nucleus</keyword>
<keyword id="KW-1185">Reference proteome</keyword>
<keyword id="KW-0804">Transcription</keyword>
<keyword id="KW-0805">Transcription regulation</keyword>
<protein>
    <recommendedName>
        <fullName>Putative B3 domain-containing protein Os03g0619850</fullName>
    </recommendedName>
</protein>
<comment type="subcellular location">
    <subcellularLocation>
        <location evidence="1">Nucleus</location>
    </subcellularLocation>
</comment>
<comment type="sequence caution" evidence="3">
    <conflict type="erroneous gene model prediction">
        <sequence resource="EMBL-CDS" id="AAT77045"/>
    </conflict>
</comment>
<proteinExistence type="inferred from homology"/>
<organism>
    <name type="scientific">Oryza sativa subsp. japonica</name>
    <name type="common">Rice</name>
    <dbReference type="NCBI Taxonomy" id="39947"/>
    <lineage>
        <taxon>Eukaryota</taxon>
        <taxon>Viridiplantae</taxon>
        <taxon>Streptophyta</taxon>
        <taxon>Embryophyta</taxon>
        <taxon>Tracheophyta</taxon>
        <taxon>Spermatophyta</taxon>
        <taxon>Magnoliopsida</taxon>
        <taxon>Liliopsida</taxon>
        <taxon>Poales</taxon>
        <taxon>Poaceae</taxon>
        <taxon>BOP clade</taxon>
        <taxon>Oryzoideae</taxon>
        <taxon>Oryzeae</taxon>
        <taxon>Oryzinae</taxon>
        <taxon>Oryza</taxon>
        <taxon>Oryza sativa</taxon>
    </lineage>
</organism>
<name>Y3198_ORYSJ</name>
<reference key="1">
    <citation type="journal article" date="2005" name="Genome Res.">
        <title>Sequence, annotation, and analysis of synteny between rice chromosome 3 and diverged grass species.</title>
        <authorList>
            <consortium name="The rice chromosome 3 sequencing consortium"/>
            <person name="Buell C.R."/>
            <person name="Yuan Q."/>
            <person name="Ouyang S."/>
            <person name="Liu J."/>
            <person name="Zhu W."/>
            <person name="Wang A."/>
            <person name="Maiti R."/>
            <person name="Haas B."/>
            <person name="Wortman J."/>
            <person name="Pertea M."/>
            <person name="Jones K.M."/>
            <person name="Kim M."/>
            <person name="Overton L."/>
            <person name="Tsitrin T."/>
            <person name="Fadrosh D."/>
            <person name="Bera J."/>
            <person name="Weaver B."/>
            <person name="Jin S."/>
            <person name="Johri S."/>
            <person name="Reardon M."/>
            <person name="Webb K."/>
            <person name="Hill J."/>
            <person name="Moffat K."/>
            <person name="Tallon L."/>
            <person name="Van Aken S."/>
            <person name="Lewis M."/>
            <person name="Utterback T."/>
            <person name="Feldblyum T."/>
            <person name="Zismann V."/>
            <person name="Iobst S."/>
            <person name="Hsiao J."/>
            <person name="de Vazeille A.R."/>
            <person name="Salzberg S.L."/>
            <person name="White O."/>
            <person name="Fraser C.M."/>
            <person name="Yu Y."/>
            <person name="Kim H."/>
            <person name="Rambo T."/>
            <person name="Currie J."/>
            <person name="Collura K."/>
            <person name="Kernodle-Thompson S."/>
            <person name="Wei F."/>
            <person name="Kudrna K."/>
            <person name="Ammiraju J.S.S."/>
            <person name="Luo M."/>
            <person name="Goicoechea J.L."/>
            <person name="Wing R.A."/>
            <person name="Henry D."/>
            <person name="Oates R."/>
            <person name="Palmer M."/>
            <person name="Pries G."/>
            <person name="Saski C."/>
            <person name="Simmons J."/>
            <person name="Soderlund C."/>
            <person name="Nelson W."/>
            <person name="de la Bastide M."/>
            <person name="Spiegel L."/>
            <person name="Nascimento L."/>
            <person name="Huang E."/>
            <person name="Preston R."/>
            <person name="Zutavern T."/>
            <person name="Palmer L."/>
            <person name="O'Shaughnessy A."/>
            <person name="Dike S."/>
            <person name="McCombie W.R."/>
            <person name="Minx P."/>
            <person name="Cordum H."/>
            <person name="Wilson R."/>
            <person name="Jin W."/>
            <person name="Lee H.R."/>
            <person name="Jiang J."/>
            <person name="Jackson S."/>
        </authorList>
    </citation>
    <scope>NUCLEOTIDE SEQUENCE [LARGE SCALE GENOMIC DNA]</scope>
    <source>
        <strain>cv. Nipponbare</strain>
    </source>
</reference>
<reference key="2">
    <citation type="journal article" date="2005" name="Nature">
        <title>The map-based sequence of the rice genome.</title>
        <authorList>
            <consortium name="International rice genome sequencing project (IRGSP)"/>
        </authorList>
    </citation>
    <scope>NUCLEOTIDE SEQUENCE [LARGE SCALE GENOMIC DNA]</scope>
    <source>
        <strain>cv. Nipponbare</strain>
    </source>
</reference>
<reference key="3">
    <citation type="journal article" date="2013" name="Rice">
        <title>Improvement of the Oryza sativa Nipponbare reference genome using next generation sequence and optical map data.</title>
        <authorList>
            <person name="Kawahara Y."/>
            <person name="de la Bastide M."/>
            <person name="Hamilton J.P."/>
            <person name="Kanamori H."/>
            <person name="McCombie W.R."/>
            <person name="Ouyang S."/>
            <person name="Schwartz D.C."/>
            <person name="Tanaka T."/>
            <person name="Wu J."/>
            <person name="Zhou S."/>
            <person name="Childs K.L."/>
            <person name="Davidson R.M."/>
            <person name="Lin H."/>
            <person name="Quesada-Ocampo L."/>
            <person name="Vaillancourt B."/>
            <person name="Sakai H."/>
            <person name="Lee S.S."/>
            <person name="Kim J."/>
            <person name="Numa H."/>
            <person name="Itoh T."/>
            <person name="Buell C.R."/>
            <person name="Matsumoto T."/>
        </authorList>
    </citation>
    <scope>GENOME REANNOTATION</scope>
    <source>
        <strain>cv. Nipponbare</strain>
    </source>
</reference>
<gene>
    <name type="ordered locus">Os03g0619850</name>
    <name type="ordered locus">LOC_Os03g42250</name>
    <name type="ORF">OSJNBa0063J18.22</name>
    <name type="ORF">OSJNBb0111B07.1</name>
</gene>
<feature type="chain" id="PRO_0000378048" description="Putative B3 domain-containing protein Os03g0619850">
    <location>
        <begin position="1"/>
        <end position="253"/>
    </location>
</feature>
<feature type="DNA-binding region" description="TF-B3" evidence="1">
    <location>
        <begin position="26"/>
        <end position="119"/>
    </location>
</feature>
<feature type="region of interest" description="Disordered" evidence="2">
    <location>
        <begin position="126"/>
        <end position="150"/>
    </location>
</feature>
<feature type="region of interest" description="Disordered" evidence="2">
    <location>
        <begin position="230"/>
        <end position="253"/>
    </location>
</feature>
<feature type="compositionally biased region" description="Basic and acidic residues" evidence="2">
    <location>
        <begin position="230"/>
        <end position="239"/>
    </location>
</feature>
<accession>Q10GP0</accession>
<accession>Q6AV20</accession>
<accession>Q851X1</accession>
<sequence length="253" mass="28133">MAGGGSRMKKSCACCKRYLEHLGGKMSCFLIRMTTDSMHSMIIPDRFVNHFGGKIPGTIKLESPNGILYVVEVTECMNKTVLQCGWEAFVDAHHIKVGDSLLFRHIENSCFEVMILDSDGSENVSLKSNRNGVSDESQESEDSEGPAGPPYILSWKSKSRLSSLQKKIIKEKVRSIQSEVPIYVAIMNKSNIGLTSSPCQLELGARYAAAVHLPDRRQAVVLQRGAAMGHRDADQERQMHHQAVPDQWLEQDS</sequence>
<dbReference type="EMBL" id="AC097280">
    <property type="protein sequence ID" value="AAO34484.1"/>
    <property type="molecule type" value="Genomic_DNA"/>
</dbReference>
<dbReference type="EMBL" id="AC107206">
    <property type="protein sequence ID" value="AAT77045.1"/>
    <property type="status" value="ALT_SEQ"/>
    <property type="molecule type" value="Genomic_DNA"/>
</dbReference>
<dbReference type="EMBL" id="DP000009">
    <property type="protein sequence ID" value="ABF97661.1"/>
    <property type="molecule type" value="Genomic_DNA"/>
</dbReference>
<dbReference type="EMBL" id="AP014959">
    <property type="status" value="NOT_ANNOTATED_CDS"/>
    <property type="molecule type" value="Genomic_DNA"/>
</dbReference>
<dbReference type="SMR" id="Q10GP0"/>
<dbReference type="FunCoup" id="Q10GP0">
    <property type="interactions" value="20"/>
</dbReference>
<dbReference type="STRING" id="39947.Q10GP0"/>
<dbReference type="PaxDb" id="39947-Q10GP0"/>
<dbReference type="HOGENOM" id="CLU_1088171_0_0_1"/>
<dbReference type="InParanoid" id="Q10GP0"/>
<dbReference type="Proteomes" id="UP000000763">
    <property type="component" value="Chromosome 3"/>
</dbReference>
<dbReference type="Proteomes" id="UP000059680">
    <property type="component" value="Chromosome 3"/>
</dbReference>
<dbReference type="GO" id="GO:0005634">
    <property type="term" value="C:nucleus"/>
    <property type="evidence" value="ECO:0007669"/>
    <property type="project" value="UniProtKB-SubCell"/>
</dbReference>
<dbReference type="GO" id="GO:0003677">
    <property type="term" value="F:DNA binding"/>
    <property type="evidence" value="ECO:0007669"/>
    <property type="project" value="UniProtKB-KW"/>
</dbReference>
<dbReference type="CDD" id="cd10017">
    <property type="entry name" value="B3_DNA"/>
    <property type="match status" value="1"/>
</dbReference>
<dbReference type="Gene3D" id="2.40.330.10">
    <property type="entry name" value="DNA-binding pseudobarrel domain"/>
    <property type="match status" value="1"/>
</dbReference>
<dbReference type="InterPro" id="IPR003340">
    <property type="entry name" value="B3_DNA-bd"/>
</dbReference>
<dbReference type="InterPro" id="IPR015300">
    <property type="entry name" value="DNA-bd_pseudobarrel_sf"/>
</dbReference>
<dbReference type="InterPro" id="IPR044837">
    <property type="entry name" value="REM16-like"/>
</dbReference>
<dbReference type="PANTHER" id="PTHR31391:SF23">
    <property type="entry name" value="B3 DOMAIN-CONTAINING PROTEIN OS03G0619800"/>
    <property type="match status" value="1"/>
</dbReference>
<dbReference type="PANTHER" id="PTHR31391">
    <property type="entry name" value="B3 DOMAIN-CONTAINING PROTEIN OS11G0197600-RELATED"/>
    <property type="match status" value="1"/>
</dbReference>
<dbReference type="Pfam" id="PF02362">
    <property type="entry name" value="B3"/>
    <property type="match status" value="1"/>
</dbReference>
<dbReference type="SMART" id="SM01019">
    <property type="entry name" value="B3"/>
    <property type="match status" value="1"/>
</dbReference>
<dbReference type="SUPFAM" id="SSF101936">
    <property type="entry name" value="DNA-binding pseudobarrel domain"/>
    <property type="match status" value="1"/>
</dbReference>
<dbReference type="PROSITE" id="PS50863">
    <property type="entry name" value="B3"/>
    <property type="match status" value="1"/>
</dbReference>
<evidence type="ECO:0000255" key="1">
    <source>
        <dbReference type="PROSITE-ProRule" id="PRU00326"/>
    </source>
</evidence>
<evidence type="ECO:0000256" key="2">
    <source>
        <dbReference type="SAM" id="MobiDB-lite"/>
    </source>
</evidence>
<evidence type="ECO:0000305" key="3"/>